<protein>
    <recommendedName>
        <fullName evidence="1">Large ribosomal subunit protein bL36</fullName>
    </recommendedName>
    <alternativeName>
        <fullName evidence="2">50S ribosomal protein L36</fullName>
    </alternativeName>
</protein>
<sequence length="38" mass="4587">MKVRASVKKRTPECKIVRRKGRLYVINKKNPKYKQRQG</sequence>
<accession>B2RLW9</accession>
<gene>
    <name evidence="1" type="primary">rpmJ</name>
    <name type="ordered locus">PGN_1845</name>
</gene>
<name>RL36_PORG3</name>
<dbReference type="EMBL" id="AP009380">
    <property type="protein sequence ID" value="BAG34364.1"/>
    <property type="molecule type" value="Genomic_DNA"/>
</dbReference>
<dbReference type="SMR" id="B2RLW9"/>
<dbReference type="KEGG" id="pgn:PGN_1845"/>
<dbReference type="eggNOG" id="COG0257">
    <property type="taxonomic scope" value="Bacteria"/>
</dbReference>
<dbReference type="HOGENOM" id="CLU_135723_3_3_10"/>
<dbReference type="OrthoDB" id="9801558at2"/>
<dbReference type="BioCyc" id="PGIN431947:G1G2V-2059-MONOMER"/>
<dbReference type="Proteomes" id="UP000008842">
    <property type="component" value="Chromosome"/>
</dbReference>
<dbReference type="GO" id="GO:1990904">
    <property type="term" value="C:ribonucleoprotein complex"/>
    <property type="evidence" value="ECO:0007669"/>
    <property type="project" value="UniProtKB-KW"/>
</dbReference>
<dbReference type="GO" id="GO:0005840">
    <property type="term" value="C:ribosome"/>
    <property type="evidence" value="ECO:0007669"/>
    <property type="project" value="UniProtKB-KW"/>
</dbReference>
<dbReference type="GO" id="GO:0003735">
    <property type="term" value="F:structural constituent of ribosome"/>
    <property type="evidence" value="ECO:0007669"/>
    <property type="project" value="InterPro"/>
</dbReference>
<dbReference type="GO" id="GO:0006412">
    <property type="term" value="P:translation"/>
    <property type="evidence" value="ECO:0007669"/>
    <property type="project" value="UniProtKB-UniRule"/>
</dbReference>
<dbReference type="HAMAP" id="MF_00251">
    <property type="entry name" value="Ribosomal_bL36"/>
    <property type="match status" value="1"/>
</dbReference>
<dbReference type="InterPro" id="IPR000473">
    <property type="entry name" value="Ribosomal_bL36"/>
</dbReference>
<dbReference type="InterPro" id="IPR035977">
    <property type="entry name" value="Ribosomal_bL36_sp"/>
</dbReference>
<dbReference type="InterPro" id="IPR047621">
    <property type="entry name" value="Ribosomal_L36_bact"/>
</dbReference>
<dbReference type="NCBIfam" id="NF002021">
    <property type="entry name" value="PRK00831.1"/>
    <property type="match status" value="1"/>
</dbReference>
<dbReference type="NCBIfam" id="TIGR01022">
    <property type="entry name" value="rpmJ_bact"/>
    <property type="match status" value="1"/>
</dbReference>
<dbReference type="PANTHER" id="PTHR47781">
    <property type="entry name" value="50S RIBOSOMAL PROTEIN L36 2"/>
    <property type="match status" value="1"/>
</dbReference>
<dbReference type="PANTHER" id="PTHR47781:SF1">
    <property type="entry name" value="LARGE RIBOSOMAL SUBUNIT PROTEIN BL36B"/>
    <property type="match status" value="1"/>
</dbReference>
<dbReference type="Pfam" id="PF00444">
    <property type="entry name" value="Ribosomal_L36"/>
    <property type="match status" value="1"/>
</dbReference>
<dbReference type="SUPFAM" id="SSF57840">
    <property type="entry name" value="Ribosomal protein L36"/>
    <property type="match status" value="1"/>
</dbReference>
<proteinExistence type="inferred from homology"/>
<keyword id="KW-0687">Ribonucleoprotein</keyword>
<keyword id="KW-0689">Ribosomal protein</keyword>
<comment type="similarity">
    <text evidence="1">Belongs to the bacterial ribosomal protein bL36 family.</text>
</comment>
<organism>
    <name type="scientific">Porphyromonas gingivalis (strain ATCC 33277 / DSM 20709 / CIP 103683 / JCM 12257 / NCTC 11834 / 2561)</name>
    <dbReference type="NCBI Taxonomy" id="431947"/>
    <lineage>
        <taxon>Bacteria</taxon>
        <taxon>Pseudomonadati</taxon>
        <taxon>Bacteroidota</taxon>
        <taxon>Bacteroidia</taxon>
        <taxon>Bacteroidales</taxon>
        <taxon>Porphyromonadaceae</taxon>
        <taxon>Porphyromonas</taxon>
    </lineage>
</organism>
<evidence type="ECO:0000255" key="1">
    <source>
        <dbReference type="HAMAP-Rule" id="MF_00251"/>
    </source>
</evidence>
<evidence type="ECO:0000305" key="2"/>
<reference key="1">
    <citation type="journal article" date="2008" name="DNA Res.">
        <title>Determination of the genome sequence of Porphyromonas gingivalis strain ATCC 33277 and genomic comparison with strain W83 revealed extensive genome rearrangements in P. gingivalis.</title>
        <authorList>
            <person name="Naito M."/>
            <person name="Hirakawa H."/>
            <person name="Yamashita A."/>
            <person name="Ohara N."/>
            <person name="Shoji M."/>
            <person name="Yukitake H."/>
            <person name="Nakayama K."/>
            <person name="Toh H."/>
            <person name="Yoshimura F."/>
            <person name="Kuhara S."/>
            <person name="Hattori M."/>
            <person name="Hayashi T."/>
            <person name="Nakayama K."/>
        </authorList>
    </citation>
    <scope>NUCLEOTIDE SEQUENCE [LARGE SCALE GENOMIC DNA]</scope>
    <source>
        <strain>ATCC 33277 / DSM 20709 / CIP 103683 / JCM 12257 / NCTC 11834 / 2561</strain>
    </source>
</reference>
<feature type="chain" id="PRO_1000101056" description="Large ribosomal subunit protein bL36">
    <location>
        <begin position="1"/>
        <end position="38"/>
    </location>
</feature>